<gene>
    <name type="primary">Slc44a3</name>
    <name type="synonym">Ctl3</name>
</gene>
<reference key="1">
    <citation type="journal article" date="2009" name="PLoS Biol.">
        <title>Lineage-specific biology revealed by a finished genome assembly of the mouse.</title>
        <authorList>
            <person name="Church D.M."/>
            <person name="Goodstadt L."/>
            <person name="Hillier L.W."/>
            <person name="Zody M.C."/>
            <person name="Goldstein S."/>
            <person name="She X."/>
            <person name="Bult C.J."/>
            <person name="Agarwala R."/>
            <person name="Cherry J.L."/>
            <person name="DiCuccio M."/>
            <person name="Hlavina W."/>
            <person name="Kapustin Y."/>
            <person name="Meric P."/>
            <person name="Maglott D."/>
            <person name="Birtle Z."/>
            <person name="Marques A.C."/>
            <person name="Graves T."/>
            <person name="Zhou S."/>
            <person name="Teague B."/>
            <person name="Potamousis K."/>
            <person name="Churas C."/>
            <person name="Place M."/>
            <person name="Herschleb J."/>
            <person name="Runnheim R."/>
            <person name="Forrest D."/>
            <person name="Amos-Landgraf J."/>
            <person name="Schwartz D.C."/>
            <person name="Cheng Z."/>
            <person name="Lindblad-Toh K."/>
            <person name="Eichler E.E."/>
            <person name="Ponting C.P."/>
        </authorList>
    </citation>
    <scope>NUCLEOTIDE SEQUENCE [LARGE SCALE GENOMIC DNA]</scope>
    <source>
        <strain>C57BL/6J</strain>
    </source>
</reference>
<reference key="2">
    <citation type="submission" date="2005-07" db="EMBL/GenBank/DDBJ databases">
        <authorList>
            <person name="Mural R.J."/>
            <person name="Adams M.D."/>
            <person name="Myers E.W."/>
            <person name="Smith H.O."/>
            <person name="Venter J.C."/>
        </authorList>
    </citation>
    <scope>NUCLEOTIDE SEQUENCE [LARGE SCALE GENOMIC DNA]</scope>
</reference>
<reference key="3">
    <citation type="journal article" date="2004" name="Genome Res.">
        <title>The status, quality, and expansion of the NIH full-length cDNA project: the Mammalian Gene Collection (MGC).</title>
        <authorList>
            <consortium name="The MGC Project Team"/>
        </authorList>
    </citation>
    <scope>NUCLEOTIDE SEQUENCE [LARGE SCALE MRNA]</scope>
    <source>
        <strain>FVB/N</strain>
        <tissue>Mammary tumor</tissue>
    </source>
</reference>
<name>CTL3_MOUSE</name>
<organism>
    <name type="scientific">Mus musculus</name>
    <name type="common">Mouse</name>
    <dbReference type="NCBI Taxonomy" id="10090"/>
    <lineage>
        <taxon>Eukaryota</taxon>
        <taxon>Metazoa</taxon>
        <taxon>Chordata</taxon>
        <taxon>Craniata</taxon>
        <taxon>Vertebrata</taxon>
        <taxon>Euteleostomi</taxon>
        <taxon>Mammalia</taxon>
        <taxon>Eutheria</taxon>
        <taxon>Euarchontoglires</taxon>
        <taxon>Glires</taxon>
        <taxon>Rodentia</taxon>
        <taxon>Myomorpha</taxon>
        <taxon>Muroidea</taxon>
        <taxon>Muridae</taxon>
        <taxon>Murinae</taxon>
        <taxon>Mus</taxon>
        <taxon>Mus</taxon>
    </lineage>
</organism>
<keyword id="KW-0325">Glycoprotein</keyword>
<keyword id="KW-0472">Membrane</keyword>
<keyword id="KW-1185">Reference proteome</keyword>
<keyword id="KW-0812">Transmembrane</keyword>
<keyword id="KW-1133">Transmembrane helix</keyword>
<dbReference type="EMBL" id="AC105336">
    <property type="status" value="NOT_ANNOTATED_CDS"/>
    <property type="molecule type" value="Genomic_DNA"/>
</dbReference>
<dbReference type="EMBL" id="AC115727">
    <property type="status" value="NOT_ANNOTATED_CDS"/>
    <property type="molecule type" value="Genomic_DNA"/>
</dbReference>
<dbReference type="EMBL" id="CH466532">
    <property type="protein sequence ID" value="EDL12341.1"/>
    <property type="molecule type" value="Genomic_DNA"/>
</dbReference>
<dbReference type="EMBL" id="BC010552">
    <property type="protein sequence ID" value="AAH10552.1"/>
    <property type="molecule type" value="mRNA"/>
</dbReference>
<dbReference type="EMBL" id="BC025548">
    <property type="protein sequence ID" value="AAH25548.1"/>
    <property type="molecule type" value="mRNA"/>
</dbReference>
<dbReference type="CCDS" id="CCDS51060.1"/>
<dbReference type="RefSeq" id="NP_663369.2">
    <property type="nucleotide sequence ID" value="NM_145394.3"/>
</dbReference>
<dbReference type="BioGRID" id="229459">
    <property type="interactions" value="1"/>
</dbReference>
<dbReference type="FunCoup" id="Q921V7">
    <property type="interactions" value="89"/>
</dbReference>
<dbReference type="STRING" id="10090.ENSMUSP00000040210"/>
<dbReference type="GlyCosmos" id="Q921V7">
    <property type="glycosylation" value="5 sites, No reported glycans"/>
</dbReference>
<dbReference type="GlyGen" id="Q921V7">
    <property type="glycosylation" value="5 sites"/>
</dbReference>
<dbReference type="PhosphoSitePlus" id="Q921V7"/>
<dbReference type="SwissPalm" id="Q921V7"/>
<dbReference type="PaxDb" id="10090-ENSMUSP00000040210"/>
<dbReference type="PeptideAtlas" id="Q921V7"/>
<dbReference type="ProteomicsDB" id="285220"/>
<dbReference type="Antibodypedia" id="33668">
    <property type="antibodies" value="56 antibodies from 15 providers"/>
</dbReference>
<dbReference type="DNASU" id="213603"/>
<dbReference type="Ensembl" id="ENSMUST00000039197.9">
    <property type="protein sequence ID" value="ENSMUSP00000040210.8"/>
    <property type="gene ID" value="ENSMUSG00000039865.9"/>
</dbReference>
<dbReference type="GeneID" id="213603"/>
<dbReference type="KEGG" id="mmu:213603"/>
<dbReference type="UCSC" id="uc008rdz.2">
    <property type="organism name" value="mouse"/>
</dbReference>
<dbReference type="AGR" id="MGI:2384860"/>
<dbReference type="CTD" id="126969"/>
<dbReference type="MGI" id="MGI:2384860">
    <property type="gene designation" value="Slc44a3"/>
</dbReference>
<dbReference type="VEuPathDB" id="HostDB:ENSMUSG00000039865"/>
<dbReference type="eggNOG" id="KOG1362">
    <property type="taxonomic scope" value="Eukaryota"/>
</dbReference>
<dbReference type="GeneTree" id="ENSGT00940000160336"/>
<dbReference type="HOGENOM" id="CLU_017181_2_0_1"/>
<dbReference type="InParanoid" id="Q921V7"/>
<dbReference type="OMA" id="LLGIRYM"/>
<dbReference type="OrthoDB" id="420519at2759"/>
<dbReference type="PhylomeDB" id="Q921V7"/>
<dbReference type="TreeFam" id="TF313325"/>
<dbReference type="Reactome" id="R-MMU-1483191">
    <property type="pathway name" value="Synthesis of PC"/>
</dbReference>
<dbReference type="Reactome" id="R-MMU-425366">
    <property type="pathway name" value="Transport of bile salts and organic acids, metal ions and amine compounds"/>
</dbReference>
<dbReference type="BioGRID-ORCS" id="213603">
    <property type="hits" value="3 hits in 76 CRISPR screens"/>
</dbReference>
<dbReference type="ChiTaRS" id="Slc44a3">
    <property type="organism name" value="mouse"/>
</dbReference>
<dbReference type="PRO" id="PR:Q921V7"/>
<dbReference type="Proteomes" id="UP000000589">
    <property type="component" value="Chromosome 3"/>
</dbReference>
<dbReference type="RNAct" id="Q921V7">
    <property type="molecule type" value="protein"/>
</dbReference>
<dbReference type="Bgee" id="ENSMUSG00000039865">
    <property type="expression patterns" value="Expressed in dorsal pancreas and 121 other cell types or tissues"/>
</dbReference>
<dbReference type="GO" id="GO:0016020">
    <property type="term" value="C:membrane"/>
    <property type="evidence" value="ECO:0007669"/>
    <property type="project" value="UniProtKB-SubCell"/>
</dbReference>
<dbReference type="GO" id="GO:0015101">
    <property type="term" value="F:organic cation transmembrane transporter activity"/>
    <property type="evidence" value="ECO:0007669"/>
    <property type="project" value="UniProtKB-ARBA"/>
</dbReference>
<dbReference type="InterPro" id="IPR007603">
    <property type="entry name" value="Choline_transptr-like"/>
</dbReference>
<dbReference type="PANTHER" id="PTHR12385">
    <property type="entry name" value="CHOLINE TRANSPORTER-LIKE (SLC FAMILY 44)"/>
    <property type="match status" value="1"/>
</dbReference>
<dbReference type="PANTHER" id="PTHR12385:SF13">
    <property type="entry name" value="CHOLINE TRANSPORTER-LIKE PROTEIN 3"/>
    <property type="match status" value="1"/>
</dbReference>
<dbReference type="Pfam" id="PF04515">
    <property type="entry name" value="Choline_transpo"/>
    <property type="match status" value="1"/>
</dbReference>
<sequence>MPGTMQCLGAEYLVSAEKTRQREWRPQIYRKCTDTPWLVLFFLFWTGLVFIMGYSVVAGAAGRLLFGYDSFGNVCGKKNSPVEGAPLSGQDMTLKKHVFFMNACNLEVKDRGLGPTALCVSSCPEKQLDTLEEVQLFANINGSFLCVYSLNSFNYTQSSSADTLCPRLPVPPSKPFPLFNRCIPQTPECYSLFASVLINDADALHRILSGIMAGRDTILGLCVFTFALSLAMLFAFRFISTLLIHIIISLVILGLLFVCGVLWWLYYDYTNDLSTELDTEKENMNCMLAFAIISTVVTVLLLALIFTLRKRIKLTVELLHVTNKAISSCPFLLFQPLWTCAILIFFWVLWVAVLLSLGTAGTAQVMEGGQVEYKPLSGIRYMWWYHLIGLIWTSEFILACQRMTVAGAMVACYFNRNQNDPPARPILSSLFVLFCYHQGTAVKGSFLLTVTRIPRVIFMCIYSTLKEPQRSAWSRGEFRCSHCGLWCLLKYLYHLNQDAYTATAINGTDFCTSAKDAHTIIAKNSSHLTSVNCFGNFVIFLGKVLVVCFSIFGGLMAFNYSRALQVWAIPLLLVAFFACVVAHSFLSVFETALDILFLCFAVDLETNDGSSEKPYFMDPGFLSVIKRTNNLNNAKSQGQKDALPNEEGTELQPIVR</sequence>
<comment type="subcellular location">
    <subcellularLocation>
        <location evidence="1">Membrane</location>
        <topology evidence="1">Multi-pass membrane protein</topology>
    </subcellularLocation>
</comment>
<comment type="similarity">
    <text evidence="4">Belongs to the CTL (choline transporter-like) family.</text>
</comment>
<feature type="chain" id="PRO_0000191721" description="Choline transporter-like protein 3">
    <location>
        <begin position="1"/>
        <end position="656"/>
    </location>
</feature>
<feature type="transmembrane region" description="Helical" evidence="2">
    <location>
        <begin position="37"/>
        <end position="57"/>
    </location>
</feature>
<feature type="transmembrane region" description="Helical" evidence="2">
    <location>
        <begin position="216"/>
        <end position="236"/>
    </location>
</feature>
<feature type="transmembrane region" description="Helical" evidence="2">
    <location>
        <begin position="242"/>
        <end position="262"/>
    </location>
</feature>
<feature type="transmembrane region" description="Helical" evidence="2">
    <location>
        <begin position="288"/>
        <end position="308"/>
    </location>
</feature>
<feature type="transmembrane region" description="Helical" evidence="2">
    <location>
        <begin position="337"/>
        <end position="357"/>
    </location>
</feature>
<feature type="transmembrane region" description="Helical" evidence="2">
    <location>
        <begin position="381"/>
        <end position="401"/>
    </location>
</feature>
<feature type="transmembrane region" description="Helical" evidence="2">
    <location>
        <begin position="537"/>
        <end position="557"/>
    </location>
</feature>
<feature type="transmembrane region" description="Helical" evidence="2">
    <location>
        <begin position="566"/>
        <end position="586"/>
    </location>
</feature>
<feature type="region of interest" description="Disordered" evidence="3">
    <location>
        <begin position="634"/>
        <end position="656"/>
    </location>
</feature>
<feature type="glycosylation site" description="N-linked (GlcNAc...) asparagine" evidence="2">
    <location>
        <position position="141"/>
    </location>
</feature>
<feature type="glycosylation site" description="N-linked (GlcNAc...) asparagine" evidence="2">
    <location>
        <position position="154"/>
    </location>
</feature>
<feature type="glycosylation site" description="N-linked (GlcNAc...) asparagine" evidence="2">
    <location>
        <position position="506"/>
    </location>
</feature>
<feature type="glycosylation site" description="N-linked (GlcNAc...) asparagine" evidence="2">
    <location>
        <position position="524"/>
    </location>
</feature>
<feature type="glycosylation site" description="N-linked (GlcNAc...) asparagine" evidence="2">
    <location>
        <position position="559"/>
    </location>
</feature>
<evidence type="ECO:0000250" key="1"/>
<evidence type="ECO:0000255" key="2"/>
<evidence type="ECO:0000256" key="3">
    <source>
        <dbReference type="SAM" id="MobiDB-lite"/>
    </source>
</evidence>
<evidence type="ECO:0000305" key="4"/>
<proteinExistence type="evidence at transcript level"/>
<accession>Q921V7</accession>
<accession>G5E8A3</accession>
<protein>
    <recommendedName>
        <fullName>Choline transporter-like protein 3</fullName>
    </recommendedName>
    <alternativeName>
        <fullName>Solute carrier family 44 member 3</fullName>
    </alternativeName>
</protein>